<comment type="function">
    <text evidence="5">May be involved in endocytic recycling of growth factor receptors such as EGFR.</text>
</comment>
<comment type="subunit">
    <text evidence="5">Associated with AP-1 and AP-2 complexes.</text>
</comment>
<comment type="interaction">
    <interactant intactId="EBI-719906">
        <id>Q6PD74</id>
    </interactant>
    <interactant intactId="EBI-10185819">
        <id>O43747-2</id>
        <label>AP1G1</label>
    </interactant>
    <organismsDiffer>false</organismsDiffer>
    <experiments>4</experiments>
</comment>
<comment type="interaction">
    <interactant intactId="EBI-719906">
        <id>Q6PD74</id>
    </interactant>
    <interactant intactId="EBI-3923129">
        <id>Q96PC3</id>
        <label>AP1S3</label>
    </interactant>
    <organismsDiffer>false</organismsDiffer>
    <experiments>6</experiments>
</comment>
<comment type="interaction">
    <interactant intactId="EBI-719906">
        <id>Q6PD74</id>
    </interactant>
    <interactant intactId="EBI-12780485">
        <id>Q96PC3-2</id>
        <label>AP1S3</label>
    </interactant>
    <organismsDiffer>false</organismsDiffer>
    <experiments>3</experiments>
</comment>
<comment type="interaction">
    <interactant intactId="EBI-719906">
        <id>Q6PD74</id>
    </interactant>
    <interactant intactId="EBI-1642835">
        <id>O94973</id>
        <label>AP2A2</label>
    </interactant>
    <organismsDiffer>false</organismsDiffer>
    <experiments>5</experiments>
</comment>
<comment type="interaction">
    <interactant intactId="EBI-719906">
        <id>Q6PD74</id>
    </interactant>
    <interactant intactId="EBI-297662">
        <id>P53680</id>
        <label>AP2S1</label>
    </interactant>
    <organismsDiffer>false</organismsDiffer>
    <experiments>11</experiments>
</comment>
<comment type="interaction">
    <interactant intactId="EBI-719906">
        <id>Q6PD74</id>
    </interactant>
    <interactant intactId="EBI-10285245">
        <id>Q96ES5</id>
        <label>HEATR1</label>
    </interactant>
    <organismsDiffer>false</organismsDiffer>
    <experiments>3</experiments>
</comment>
<comment type="subcellular location">
    <subcellularLocation>
        <location evidence="4 5">Cytoplasm</location>
        <location evidence="4 5">Cytosol</location>
    </subcellularLocation>
</comment>
<comment type="alternative products">
    <event type="alternative splicing"/>
    <isoform>
        <id>Q6PD74-1</id>
        <name>1</name>
        <sequence type="displayed"/>
    </isoform>
    <isoform>
        <id>Q6PD74-2</id>
        <name>2</name>
        <sequence type="described" ref="VSP_054597"/>
    </isoform>
</comment>
<comment type="tissue specificity">
    <text evidence="4 5">Widely expressed, including in skin and keratinocytes, with highest levels in adrenal gland, rectum and thymus.</text>
</comment>
<comment type="disease" evidence="4 5">
    <disease id="DI-03540">
        <name>Keratoderma, palmoplantar, punctate 1A</name>
        <acronym>PPKP1A</acronym>
        <description>An autosomal dominant dermatological disorder characterized by multiple hyperkeratotic, centrally indented, papules that develop in early adolescence, or later, and are irregularly distributed on the palms and soles (other palmoplantar keratoses have mostly diffuse hyperkeratinization). In mechanically irritated areas, confluent plaques can be found. Interfamilial and intrafamilial severity shows broad variation. In some cases, PPKP1 is associated with the development of early- and late-onset malignancies, including squamous cell carcinoma.</description>
        <dbReference type="MIM" id="148600"/>
    </disease>
    <text>The disease is caused by variants affecting the gene represented in this entry.</text>
</comment>
<keyword id="KW-0002">3D-structure</keyword>
<keyword id="KW-0025">Alternative splicing</keyword>
<keyword id="KW-0963">Cytoplasm</keyword>
<keyword id="KW-1007">Palmoplantar keratoderma</keyword>
<keyword id="KW-0597">Phosphoprotein</keyword>
<keyword id="KW-0653">Protein transport</keyword>
<keyword id="KW-1267">Proteomics identification</keyword>
<keyword id="KW-1185">Reference proteome</keyword>
<keyword id="KW-0813">Transport</keyword>
<sequence length="315" mass="34594">MAAGVPCALVTSCSSVFSGDQLVQHILGTEDLIVEVTSNDAVRFYPWTIDNKYYSADINLCVVPNKFLVTAEIAESVQAFVVYFDSTQKSGLDSVSSWLPLAKAWLPEVMILVCDRVSEDGINRQKAQEWCIKHGFELVELSPEELPEEDDDFPESTGVKRIVQALNANVWSNVVMKNDRNQGFSLLNSLTGTNHSIGSADPCHPEQPHLPAADSTESLSDHRGGASNTTDAQVDSIVDPMLDLDIQELASLTTGGGDVENFERLFSKLKEMKDKAATLPHEQRKVHAEKVAKAFWMAIGGDRDEIEGLSSDEEH</sequence>
<feature type="chain" id="PRO_0000058134" description="Alpha- and gamma-adaptin-binding protein p34">
    <location>
        <begin position="1"/>
        <end position="315"/>
    </location>
</feature>
<feature type="region of interest" description="Disordered" evidence="1">
    <location>
        <begin position="197"/>
        <end position="234"/>
    </location>
</feature>
<feature type="modified residue" description="Phosphoserine" evidence="9 10 11 12">
    <location>
        <position position="310"/>
    </location>
</feature>
<feature type="modified residue" description="Phosphoserine" evidence="9 11 12">
    <location>
        <position position="311"/>
    </location>
</feature>
<feature type="splice variant" id="VSP_054597" description="In isoform 2." evidence="7">
    <location>
        <begin position="1"/>
        <end position="109"/>
    </location>
</feature>
<feature type="sequence variant" id="VAR_021533" description="In dbSNP:rs7173826." evidence="2 3 6">
    <original>I</original>
    <variation>L</variation>
    <location>
        <position position="132"/>
    </location>
</feature>
<feature type="sequence conflict" description="In Ref. 1; CAB66649 and 3; CAG38571." evidence="8" ref="1 3">
    <original>I</original>
    <variation>T</variation>
    <location>
        <position position="26"/>
    </location>
</feature>
<feature type="sequence conflict" description="In Ref. 3; CAG38571." evidence="8" ref="3">
    <original>V</original>
    <variation>A</variation>
    <location>
        <position position="77"/>
    </location>
</feature>
<feature type="sequence conflict" description="In Ref. 1; CAB66649 and 3; CAG38571." evidence="8" ref="1 3">
    <original>Q</original>
    <variation>R</variation>
    <location>
        <position position="88"/>
    </location>
</feature>
<feature type="sequence conflict" description="In Ref. 1; CAB66649 and 3; CAG38571." evidence="8" ref="1 3">
    <original>C</original>
    <variation>S</variation>
    <location>
        <position position="131"/>
    </location>
</feature>
<feature type="sequence conflict" description="In Ref. 1; CAB66649 and 3; CAG38571." evidence="8" ref="1 3">
    <original>L</original>
    <variation>P</variation>
    <location>
        <position position="265"/>
    </location>
</feature>
<feature type="sequence conflict" description="In Ref. 1; CAB66649 and 3; CAG38571." evidence="8" ref="1 3">
    <original>E</original>
    <variation>G</variation>
    <location>
        <position position="313"/>
    </location>
</feature>
<feature type="helix" evidence="13">
    <location>
        <begin position="258"/>
        <end position="299"/>
    </location>
</feature>
<accession>Q6PD74</accession>
<accession>B4DG44</accession>
<accession>Q6FI86</accession>
<accession>Q7Z5X9</accession>
<accession>Q9H0P1</accession>
<accession>Q9HAK0</accession>
<evidence type="ECO:0000256" key="1">
    <source>
        <dbReference type="SAM" id="MobiDB-lite"/>
    </source>
</evidence>
<evidence type="ECO:0000269" key="2">
    <source>
    </source>
</evidence>
<evidence type="ECO:0000269" key="3">
    <source>
    </source>
</evidence>
<evidence type="ECO:0000269" key="4">
    <source>
    </source>
</evidence>
<evidence type="ECO:0000269" key="5">
    <source>
    </source>
</evidence>
<evidence type="ECO:0000269" key="6">
    <source ref="3"/>
</evidence>
<evidence type="ECO:0000303" key="7">
    <source>
    </source>
</evidence>
<evidence type="ECO:0000305" key="8"/>
<evidence type="ECO:0007744" key="9">
    <source>
    </source>
</evidence>
<evidence type="ECO:0007744" key="10">
    <source>
    </source>
</evidence>
<evidence type="ECO:0007744" key="11">
    <source>
    </source>
</evidence>
<evidence type="ECO:0007744" key="12">
    <source>
    </source>
</evidence>
<evidence type="ECO:0007829" key="13">
    <source>
        <dbReference type="PDB" id="7TWD"/>
    </source>
</evidence>
<dbReference type="EMBL" id="AL136715">
    <property type="protein sequence ID" value="CAB66649.1"/>
    <property type="molecule type" value="mRNA"/>
</dbReference>
<dbReference type="EMBL" id="AK021568">
    <property type="protein sequence ID" value="BAB13845.1"/>
    <property type="molecule type" value="mRNA"/>
</dbReference>
<dbReference type="EMBL" id="AK294402">
    <property type="protein sequence ID" value="BAG57655.1"/>
    <property type="molecule type" value="mRNA"/>
</dbReference>
<dbReference type="EMBL" id="CR533540">
    <property type="protein sequence ID" value="CAG38571.1"/>
    <property type="molecule type" value="mRNA"/>
</dbReference>
<dbReference type="EMBL" id="AC012568">
    <property type="status" value="NOT_ANNOTATED_CDS"/>
    <property type="molecule type" value="Genomic_DNA"/>
</dbReference>
<dbReference type="EMBL" id="AC110292">
    <property type="status" value="NOT_ANNOTATED_CDS"/>
    <property type="molecule type" value="Genomic_DNA"/>
</dbReference>
<dbReference type="EMBL" id="BC001975">
    <property type="protein sequence ID" value="AAH01975.1"/>
    <property type="molecule type" value="mRNA"/>
</dbReference>
<dbReference type="EMBL" id="BC047026">
    <property type="protein sequence ID" value="AAH47026.1"/>
    <property type="molecule type" value="mRNA"/>
</dbReference>
<dbReference type="EMBL" id="BC058886">
    <property type="protein sequence ID" value="AAH58886.1"/>
    <property type="molecule type" value="mRNA"/>
</dbReference>
<dbReference type="CCDS" id="CCDS42050.1">
    <molecule id="Q6PD74-1"/>
</dbReference>
<dbReference type="CCDS" id="CCDS61679.1">
    <molecule id="Q6PD74-2"/>
</dbReference>
<dbReference type="RefSeq" id="NP_001258814.1">
    <molecule id="Q6PD74-2"/>
    <property type="nucleotide sequence ID" value="NM_001271885.2"/>
</dbReference>
<dbReference type="RefSeq" id="NP_001258815.1">
    <molecule id="Q6PD74-2"/>
    <property type="nucleotide sequence ID" value="NM_001271886.2"/>
</dbReference>
<dbReference type="RefSeq" id="NP_078942.3">
    <molecule id="Q6PD74-1"/>
    <property type="nucleotide sequence ID" value="NM_024666.4"/>
</dbReference>
<dbReference type="RefSeq" id="XP_011520322.1">
    <property type="nucleotide sequence ID" value="XM_011522020.1"/>
</dbReference>
<dbReference type="PDB" id="7TWD">
    <property type="method" value="X-ray"/>
    <property type="resolution" value="2.11 A"/>
    <property type="chains" value="A/B=258-301"/>
</dbReference>
<dbReference type="PDBsum" id="7TWD"/>
<dbReference type="SMR" id="Q6PD74"/>
<dbReference type="BioGRID" id="122835">
    <property type="interactions" value="35"/>
</dbReference>
<dbReference type="FunCoup" id="Q6PD74">
    <property type="interactions" value="2347"/>
</dbReference>
<dbReference type="IntAct" id="Q6PD74">
    <property type="interactions" value="26"/>
</dbReference>
<dbReference type="STRING" id="9606.ENSP00000261880"/>
<dbReference type="TCDB" id="8.A.203.1.1">
    <property type="family name" value="the adaptor protein 4 chaparone (aagab) family"/>
</dbReference>
<dbReference type="GlyGen" id="Q6PD74">
    <property type="glycosylation" value="1 site, 1 O-linked glycan (1 site)"/>
</dbReference>
<dbReference type="iPTMnet" id="Q6PD74"/>
<dbReference type="PhosphoSitePlus" id="Q6PD74"/>
<dbReference type="BioMuta" id="AAGAB"/>
<dbReference type="DMDM" id="62286981"/>
<dbReference type="jPOST" id="Q6PD74"/>
<dbReference type="MassIVE" id="Q6PD74"/>
<dbReference type="PaxDb" id="9606-ENSP00000261880"/>
<dbReference type="PeptideAtlas" id="Q6PD74"/>
<dbReference type="ProteomicsDB" id="4104"/>
<dbReference type="ProteomicsDB" id="67069">
    <molecule id="Q6PD74-1"/>
</dbReference>
<dbReference type="Pumba" id="Q6PD74"/>
<dbReference type="Antibodypedia" id="26235">
    <property type="antibodies" value="116 antibodies from 21 providers"/>
</dbReference>
<dbReference type="DNASU" id="79719"/>
<dbReference type="Ensembl" id="ENST00000261880.10">
    <molecule id="Q6PD74-1"/>
    <property type="protein sequence ID" value="ENSP00000261880.5"/>
    <property type="gene ID" value="ENSG00000103591.13"/>
</dbReference>
<dbReference type="Ensembl" id="ENST00000542650.5">
    <molecule id="Q6PD74-2"/>
    <property type="protein sequence ID" value="ENSP00000440735.1"/>
    <property type="gene ID" value="ENSG00000103591.13"/>
</dbReference>
<dbReference type="Ensembl" id="ENST00000561452.5">
    <molecule id="Q6PD74-2"/>
    <property type="protein sequence ID" value="ENSP00000453263.1"/>
    <property type="gene ID" value="ENSG00000103591.13"/>
</dbReference>
<dbReference type="GeneID" id="79719"/>
<dbReference type="KEGG" id="hsa:79719"/>
<dbReference type="MANE-Select" id="ENST00000261880.10">
    <property type="protein sequence ID" value="ENSP00000261880.5"/>
    <property type="RefSeq nucleotide sequence ID" value="NM_024666.5"/>
    <property type="RefSeq protein sequence ID" value="NP_078942.3"/>
</dbReference>
<dbReference type="UCSC" id="uc002aqk.6">
    <molecule id="Q6PD74-1"/>
    <property type="organism name" value="human"/>
</dbReference>
<dbReference type="AGR" id="HGNC:25662"/>
<dbReference type="CTD" id="79719"/>
<dbReference type="DisGeNET" id="79719"/>
<dbReference type="GeneCards" id="AAGAB"/>
<dbReference type="HGNC" id="HGNC:25662">
    <property type="gene designation" value="AAGAB"/>
</dbReference>
<dbReference type="HPA" id="ENSG00000103591">
    <property type="expression patterns" value="Low tissue specificity"/>
</dbReference>
<dbReference type="MalaCards" id="AAGAB"/>
<dbReference type="MIM" id="148600">
    <property type="type" value="phenotype"/>
</dbReference>
<dbReference type="MIM" id="614888">
    <property type="type" value="gene"/>
</dbReference>
<dbReference type="neXtProt" id="NX_Q6PD74"/>
<dbReference type="OpenTargets" id="ENSG00000103591"/>
<dbReference type="Orphanet" id="79501">
    <property type="disease" value="Punctate palmoplantar keratoderma type 1"/>
</dbReference>
<dbReference type="PharmGKB" id="PA165478457"/>
<dbReference type="VEuPathDB" id="HostDB:ENSG00000103591"/>
<dbReference type="eggNOG" id="KOG4273">
    <property type="taxonomic scope" value="Eukaryota"/>
</dbReference>
<dbReference type="GeneTree" id="ENSGT00390000007218"/>
<dbReference type="HOGENOM" id="CLU_056826_0_0_1"/>
<dbReference type="InParanoid" id="Q6PD74"/>
<dbReference type="OMA" id="NEASHSF"/>
<dbReference type="OrthoDB" id="10261384at2759"/>
<dbReference type="PAN-GO" id="Q6PD74">
    <property type="GO annotations" value="0 GO annotations based on evolutionary models"/>
</dbReference>
<dbReference type="PhylomeDB" id="Q6PD74"/>
<dbReference type="TreeFam" id="TF328856"/>
<dbReference type="PathwayCommons" id="Q6PD74"/>
<dbReference type="SignaLink" id="Q6PD74"/>
<dbReference type="BioGRID-ORCS" id="79719">
    <property type="hits" value="46 hits in 1160 CRISPR screens"/>
</dbReference>
<dbReference type="ChiTaRS" id="AAGAB">
    <property type="organism name" value="human"/>
</dbReference>
<dbReference type="GeneWiki" id="FLJ11506"/>
<dbReference type="GenomeRNAi" id="79719"/>
<dbReference type="Pharos" id="Q6PD74">
    <property type="development level" value="Tbio"/>
</dbReference>
<dbReference type="PRO" id="PR:Q6PD74"/>
<dbReference type="Proteomes" id="UP000005640">
    <property type="component" value="Chromosome 15"/>
</dbReference>
<dbReference type="RNAct" id="Q6PD74">
    <property type="molecule type" value="protein"/>
</dbReference>
<dbReference type="Bgee" id="ENSG00000103591">
    <property type="expression patterns" value="Expressed in islet of Langerhans and 197 other cell types or tissues"/>
</dbReference>
<dbReference type="ExpressionAtlas" id="Q6PD74">
    <property type="expression patterns" value="baseline and differential"/>
</dbReference>
<dbReference type="GO" id="GO:0005737">
    <property type="term" value="C:cytoplasm"/>
    <property type="evidence" value="ECO:0000314"/>
    <property type="project" value="LIFEdb"/>
</dbReference>
<dbReference type="GO" id="GO:0005829">
    <property type="term" value="C:cytosol"/>
    <property type="evidence" value="ECO:0000314"/>
    <property type="project" value="HPA"/>
</dbReference>
<dbReference type="GO" id="GO:0016607">
    <property type="term" value="C:nuclear speck"/>
    <property type="evidence" value="ECO:0000314"/>
    <property type="project" value="HPA"/>
</dbReference>
<dbReference type="GO" id="GO:0015031">
    <property type="term" value="P:protein transport"/>
    <property type="evidence" value="ECO:0007669"/>
    <property type="project" value="UniProtKB-KW"/>
</dbReference>
<dbReference type="FunFam" id="3.40.50.11960:FF:000001">
    <property type="entry name" value="alpha- and gamma-adaptin-binding protein p34 isoform X1"/>
    <property type="match status" value="1"/>
</dbReference>
<dbReference type="Gene3D" id="3.40.50.11960">
    <property type="match status" value="1"/>
</dbReference>
<dbReference type="InterPro" id="IPR019341">
    <property type="entry name" value="Alpha/Gamma-adaptin-bd_p34"/>
</dbReference>
<dbReference type="PANTHER" id="PTHR14659">
    <property type="entry name" value="ALPHA- AND GAMMA-ADAPTIN-BINDING PROTEIN P34"/>
    <property type="match status" value="1"/>
</dbReference>
<dbReference type="PANTHER" id="PTHR14659:SF1">
    <property type="entry name" value="ALPHA- AND GAMMA-ADAPTIN-BINDING PROTEIN P34"/>
    <property type="match status" value="1"/>
</dbReference>
<dbReference type="Pfam" id="PF10199">
    <property type="entry name" value="Adaptin_binding"/>
    <property type="match status" value="1"/>
</dbReference>
<reference key="1">
    <citation type="journal article" date="2001" name="Genome Res.">
        <title>Towards a catalog of human genes and proteins: sequencing and analysis of 500 novel complete protein coding human cDNAs.</title>
        <authorList>
            <person name="Wiemann S."/>
            <person name="Weil B."/>
            <person name="Wellenreuther R."/>
            <person name="Gassenhuber J."/>
            <person name="Glassl S."/>
            <person name="Ansorge W."/>
            <person name="Boecher M."/>
            <person name="Bloecker H."/>
            <person name="Bauersachs S."/>
            <person name="Blum H."/>
            <person name="Lauber J."/>
            <person name="Duesterhoeft A."/>
            <person name="Beyer A."/>
            <person name="Koehrer K."/>
            <person name="Strack N."/>
            <person name="Mewes H.-W."/>
            <person name="Ottenwaelder B."/>
            <person name="Obermaier B."/>
            <person name="Tampe J."/>
            <person name="Heubner D."/>
            <person name="Wambutt R."/>
            <person name="Korn B."/>
            <person name="Klein M."/>
            <person name="Poustka A."/>
        </authorList>
    </citation>
    <scope>NUCLEOTIDE SEQUENCE [LARGE SCALE MRNA] (ISOFORM 1)</scope>
    <scope>VARIANT LEU-132</scope>
    <source>
        <tissue>Fetal kidney</tissue>
    </source>
</reference>
<reference key="2">
    <citation type="journal article" date="2004" name="Nat. Genet.">
        <title>Complete sequencing and characterization of 21,243 full-length human cDNAs.</title>
        <authorList>
            <person name="Ota T."/>
            <person name="Suzuki Y."/>
            <person name="Nishikawa T."/>
            <person name="Otsuki T."/>
            <person name="Sugiyama T."/>
            <person name="Irie R."/>
            <person name="Wakamatsu A."/>
            <person name="Hayashi K."/>
            <person name="Sato H."/>
            <person name="Nagai K."/>
            <person name="Kimura K."/>
            <person name="Makita H."/>
            <person name="Sekine M."/>
            <person name="Obayashi M."/>
            <person name="Nishi T."/>
            <person name="Shibahara T."/>
            <person name="Tanaka T."/>
            <person name="Ishii S."/>
            <person name="Yamamoto J."/>
            <person name="Saito K."/>
            <person name="Kawai Y."/>
            <person name="Isono Y."/>
            <person name="Nakamura Y."/>
            <person name="Nagahari K."/>
            <person name="Murakami K."/>
            <person name="Yasuda T."/>
            <person name="Iwayanagi T."/>
            <person name="Wagatsuma M."/>
            <person name="Shiratori A."/>
            <person name="Sudo H."/>
            <person name="Hosoiri T."/>
            <person name="Kaku Y."/>
            <person name="Kodaira H."/>
            <person name="Kondo H."/>
            <person name="Sugawara M."/>
            <person name="Takahashi M."/>
            <person name="Kanda K."/>
            <person name="Yokoi T."/>
            <person name="Furuya T."/>
            <person name="Kikkawa E."/>
            <person name="Omura Y."/>
            <person name="Abe K."/>
            <person name="Kamihara K."/>
            <person name="Katsuta N."/>
            <person name="Sato K."/>
            <person name="Tanikawa M."/>
            <person name="Yamazaki M."/>
            <person name="Ninomiya K."/>
            <person name="Ishibashi T."/>
            <person name="Yamashita H."/>
            <person name="Murakawa K."/>
            <person name="Fujimori K."/>
            <person name="Tanai H."/>
            <person name="Kimata M."/>
            <person name="Watanabe M."/>
            <person name="Hiraoka S."/>
            <person name="Chiba Y."/>
            <person name="Ishida S."/>
            <person name="Ono Y."/>
            <person name="Takiguchi S."/>
            <person name="Watanabe S."/>
            <person name="Yosida M."/>
            <person name="Hotuta T."/>
            <person name="Kusano J."/>
            <person name="Kanehori K."/>
            <person name="Takahashi-Fujii A."/>
            <person name="Hara H."/>
            <person name="Tanase T.-O."/>
            <person name="Nomura Y."/>
            <person name="Togiya S."/>
            <person name="Komai F."/>
            <person name="Hara R."/>
            <person name="Takeuchi K."/>
            <person name="Arita M."/>
            <person name="Imose N."/>
            <person name="Musashino K."/>
            <person name="Yuuki H."/>
            <person name="Oshima A."/>
            <person name="Sasaki N."/>
            <person name="Aotsuka S."/>
            <person name="Yoshikawa Y."/>
            <person name="Matsunawa H."/>
            <person name="Ichihara T."/>
            <person name="Shiohata N."/>
            <person name="Sano S."/>
            <person name="Moriya S."/>
            <person name="Momiyama H."/>
            <person name="Satoh N."/>
            <person name="Takami S."/>
            <person name="Terashima Y."/>
            <person name="Suzuki O."/>
            <person name="Nakagawa S."/>
            <person name="Senoh A."/>
            <person name="Mizoguchi H."/>
            <person name="Goto Y."/>
            <person name="Shimizu F."/>
            <person name="Wakebe H."/>
            <person name="Hishigaki H."/>
            <person name="Watanabe T."/>
            <person name="Sugiyama A."/>
            <person name="Takemoto M."/>
            <person name="Kawakami B."/>
            <person name="Yamazaki M."/>
            <person name="Watanabe K."/>
            <person name="Kumagai A."/>
            <person name="Itakura S."/>
            <person name="Fukuzumi Y."/>
            <person name="Fujimori Y."/>
            <person name="Komiyama M."/>
            <person name="Tashiro H."/>
            <person name="Tanigami A."/>
            <person name="Fujiwara T."/>
            <person name="Ono T."/>
            <person name="Yamada K."/>
            <person name="Fujii Y."/>
            <person name="Ozaki K."/>
            <person name="Hirao M."/>
            <person name="Ohmori Y."/>
            <person name="Kawabata A."/>
            <person name="Hikiji T."/>
            <person name="Kobatake N."/>
            <person name="Inagaki H."/>
            <person name="Ikema Y."/>
            <person name="Okamoto S."/>
            <person name="Okitani R."/>
            <person name="Kawakami T."/>
            <person name="Noguchi S."/>
            <person name="Itoh T."/>
            <person name="Shigeta K."/>
            <person name="Senba T."/>
            <person name="Matsumura K."/>
            <person name="Nakajima Y."/>
            <person name="Mizuno T."/>
            <person name="Morinaga M."/>
            <person name="Sasaki M."/>
            <person name="Togashi T."/>
            <person name="Oyama M."/>
            <person name="Hata H."/>
            <person name="Watanabe M."/>
            <person name="Komatsu T."/>
            <person name="Mizushima-Sugano J."/>
            <person name="Satoh T."/>
            <person name="Shirai Y."/>
            <person name="Takahashi Y."/>
            <person name="Nakagawa K."/>
            <person name="Okumura K."/>
            <person name="Nagase T."/>
            <person name="Nomura N."/>
            <person name="Kikuchi H."/>
            <person name="Masuho Y."/>
            <person name="Yamashita R."/>
            <person name="Nakai K."/>
            <person name="Yada T."/>
            <person name="Nakamura Y."/>
            <person name="Ohara O."/>
            <person name="Isogai T."/>
            <person name="Sugano S."/>
        </authorList>
    </citation>
    <scope>NUCLEOTIDE SEQUENCE [LARGE SCALE MRNA] (ISOFORMS 1 AND 2)</scope>
    <scope>VARIANT LEU-132</scope>
    <source>
        <tissue>Amygdala</tissue>
        <tissue>Embryo</tissue>
    </source>
</reference>
<reference key="3">
    <citation type="submission" date="2004-06" db="EMBL/GenBank/DDBJ databases">
        <title>Cloning of human full open reading frames in Gateway(TM) system entry vector (pDONR201).</title>
        <authorList>
            <person name="Ebert L."/>
            <person name="Schick M."/>
            <person name="Neubert P."/>
            <person name="Schatten R."/>
            <person name="Henze S."/>
            <person name="Korn B."/>
        </authorList>
    </citation>
    <scope>NUCLEOTIDE SEQUENCE [LARGE SCALE MRNA] (ISOFORM 1)</scope>
    <scope>VARIANT LEU-132</scope>
</reference>
<reference key="4">
    <citation type="journal article" date="2006" name="Nature">
        <title>Analysis of the DNA sequence and duplication history of human chromosome 15.</title>
        <authorList>
            <person name="Zody M.C."/>
            <person name="Garber M."/>
            <person name="Sharpe T."/>
            <person name="Young S.K."/>
            <person name="Rowen L."/>
            <person name="O'Neill K."/>
            <person name="Whittaker C.A."/>
            <person name="Kamal M."/>
            <person name="Chang J.L."/>
            <person name="Cuomo C.A."/>
            <person name="Dewar K."/>
            <person name="FitzGerald M.G."/>
            <person name="Kodira C.D."/>
            <person name="Madan A."/>
            <person name="Qin S."/>
            <person name="Yang X."/>
            <person name="Abbasi N."/>
            <person name="Abouelleil A."/>
            <person name="Arachchi H.M."/>
            <person name="Baradarani L."/>
            <person name="Birditt B."/>
            <person name="Bloom S."/>
            <person name="Bloom T."/>
            <person name="Borowsky M.L."/>
            <person name="Burke J."/>
            <person name="Butler J."/>
            <person name="Cook A."/>
            <person name="DeArellano K."/>
            <person name="DeCaprio D."/>
            <person name="Dorris L. III"/>
            <person name="Dors M."/>
            <person name="Eichler E.E."/>
            <person name="Engels R."/>
            <person name="Fahey J."/>
            <person name="Fleetwood P."/>
            <person name="Friedman C."/>
            <person name="Gearin G."/>
            <person name="Hall J.L."/>
            <person name="Hensley G."/>
            <person name="Johnson E."/>
            <person name="Jones C."/>
            <person name="Kamat A."/>
            <person name="Kaur A."/>
            <person name="Locke D.P."/>
            <person name="Madan A."/>
            <person name="Munson G."/>
            <person name="Jaffe D.B."/>
            <person name="Lui A."/>
            <person name="Macdonald P."/>
            <person name="Mauceli E."/>
            <person name="Naylor J.W."/>
            <person name="Nesbitt R."/>
            <person name="Nicol R."/>
            <person name="O'Leary S.B."/>
            <person name="Ratcliffe A."/>
            <person name="Rounsley S."/>
            <person name="She X."/>
            <person name="Sneddon K.M.B."/>
            <person name="Stewart S."/>
            <person name="Sougnez C."/>
            <person name="Stone S.M."/>
            <person name="Topham K."/>
            <person name="Vincent D."/>
            <person name="Wang S."/>
            <person name="Zimmer A.R."/>
            <person name="Birren B.W."/>
            <person name="Hood L."/>
            <person name="Lander E.S."/>
            <person name="Nusbaum C."/>
        </authorList>
    </citation>
    <scope>NUCLEOTIDE SEQUENCE [LARGE SCALE GENOMIC DNA]</scope>
</reference>
<reference key="5">
    <citation type="journal article" date="2004" name="Genome Res.">
        <title>The status, quality, and expansion of the NIH full-length cDNA project: the Mammalian Gene Collection (MGC).</title>
        <authorList>
            <consortium name="The MGC Project Team"/>
        </authorList>
    </citation>
    <scope>NUCLEOTIDE SEQUENCE [LARGE SCALE MRNA] (ISOFORM 1)</scope>
    <source>
        <tissue>Cervix</tissue>
        <tissue>Uterus</tissue>
    </source>
</reference>
<reference key="6">
    <citation type="journal article" date="2008" name="Mol. Cell">
        <title>Kinase-selective enrichment enables quantitative phosphoproteomics of the kinome across the cell cycle.</title>
        <authorList>
            <person name="Daub H."/>
            <person name="Olsen J.V."/>
            <person name="Bairlein M."/>
            <person name="Gnad F."/>
            <person name="Oppermann F.S."/>
            <person name="Korner R."/>
            <person name="Greff Z."/>
            <person name="Keri G."/>
            <person name="Stemmann O."/>
            <person name="Mann M."/>
        </authorList>
    </citation>
    <scope>PHOSPHORYLATION [LARGE SCALE ANALYSIS] AT SER-310 AND SER-311</scope>
    <scope>IDENTIFICATION BY MASS SPECTROMETRY [LARGE SCALE ANALYSIS]</scope>
    <source>
        <tissue>Cervix carcinoma</tissue>
    </source>
</reference>
<reference key="7">
    <citation type="journal article" date="2008" name="Proc. Natl. Acad. Sci. U.S.A.">
        <title>A quantitative atlas of mitotic phosphorylation.</title>
        <authorList>
            <person name="Dephoure N."/>
            <person name="Zhou C."/>
            <person name="Villen J."/>
            <person name="Beausoleil S.A."/>
            <person name="Bakalarski C.E."/>
            <person name="Elledge S.J."/>
            <person name="Gygi S.P."/>
        </authorList>
    </citation>
    <scope>IDENTIFICATION BY MASS SPECTROMETRY [LARGE SCALE ANALYSIS]</scope>
    <source>
        <tissue>Cervix carcinoma</tissue>
    </source>
</reference>
<reference key="8">
    <citation type="journal article" date="2009" name="Sci. Signal.">
        <title>Quantitative phosphoproteomic analysis of T cell receptor signaling reveals system-wide modulation of protein-protein interactions.</title>
        <authorList>
            <person name="Mayya V."/>
            <person name="Lundgren D.H."/>
            <person name="Hwang S.-I."/>
            <person name="Rezaul K."/>
            <person name="Wu L."/>
            <person name="Eng J.K."/>
            <person name="Rodionov V."/>
            <person name="Han D.K."/>
        </authorList>
    </citation>
    <scope>PHOSPHORYLATION [LARGE SCALE ANALYSIS] AT SER-310</scope>
    <scope>IDENTIFICATION BY MASS SPECTROMETRY [LARGE SCALE ANALYSIS]</scope>
    <source>
        <tissue>Leukemic T-cell</tissue>
    </source>
</reference>
<reference key="9">
    <citation type="journal article" date="2010" name="Sci. Signal.">
        <title>Quantitative phosphoproteomics reveals widespread full phosphorylation site occupancy during mitosis.</title>
        <authorList>
            <person name="Olsen J.V."/>
            <person name="Vermeulen M."/>
            <person name="Santamaria A."/>
            <person name="Kumar C."/>
            <person name="Miller M.L."/>
            <person name="Jensen L.J."/>
            <person name="Gnad F."/>
            <person name="Cox J."/>
            <person name="Jensen T.S."/>
            <person name="Nigg E.A."/>
            <person name="Brunak S."/>
            <person name="Mann M."/>
        </authorList>
    </citation>
    <scope>PHOSPHORYLATION [LARGE SCALE ANALYSIS] AT SER-310 AND SER-311</scope>
    <scope>IDENTIFICATION BY MASS SPECTROMETRY [LARGE SCALE ANALYSIS]</scope>
    <source>
        <tissue>Cervix carcinoma</tissue>
    </source>
</reference>
<reference key="10">
    <citation type="journal article" date="2011" name="Sci. Signal.">
        <title>System-wide temporal characterization of the proteome and phosphoproteome of human embryonic stem cell differentiation.</title>
        <authorList>
            <person name="Rigbolt K.T."/>
            <person name="Prokhorova T.A."/>
            <person name="Akimov V."/>
            <person name="Henningsen J."/>
            <person name="Johansen P.T."/>
            <person name="Kratchmarova I."/>
            <person name="Kassem M."/>
            <person name="Mann M."/>
            <person name="Olsen J.V."/>
            <person name="Blagoev B."/>
        </authorList>
    </citation>
    <scope>PHOSPHORYLATION [LARGE SCALE ANALYSIS] AT SER-310 AND SER-311</scope>
    <scope>IDENTIFICATION BY MASS SPECTROMETRY [LARGE SCALE ANALYSIS]</scope>
</reference>
<reference key="11">
    <citation type="journal article" date="2012" name="Am. J. Hum. Genet.">
        <title>Nonsense mutations in AAGAB cause punctate palmoplantar keratoderma type Buschke-Fischer-Brauer.</title>
        <authorList>
            <person name="Giehl K.A."/>
            <person name="Eckstein G.N."/>
            <person name="Pasternack S.M."/>
            <person name="Praetzel-Wunder S."/>
            <person name="Ruzicka T."/>
            <person name="Lichtner P."/>
            <person name="Seidl K."/>
            <person name="Rogers M."/>
            <person name="Graf E."/>
            <person name="Langbein L."/>
            <person name="Braun-Falco M."/>
            <person name="Betz R.C."/>
            <person name="Strom T.M."/>
        </authorList>
    </citation>
    <scope>INVOLVEMENT IN PPKP1A</scope>
    <scope>SUBCELLULAR LOCATION</scope>
    <scope>TISSUE SPECIFICITY</scope>
</reference>
<reference key="12">
    <citation type="journal article" date="2012" name="Nat. Genet.">
        <title>Haploinsufficiency for AAGAB causes clinically heterogeneous forms of punctate palmoplantar keratoderma.</title>
        <authorList>
            <person name="Pohler E."/>
            <person name="Mamai O."/>
            <person name="Hirst J."/>
            <person name="Zamiri M."/>
            <person name="Horn H."/>
            <person name="Nomura T."/>
            <person name="Irvine A.D."/>
            <person name="Moran B."/>
            <person name="Wilson N.J."/>
            <person name="Smith F.J."/>
            <person name="Goh C.S."/>
            <person name="Sandilands A."/>
            <person name="Cole C."/>
            <person name="Barton G.J."/>
            <person name="Evans A.T."/>
            <person name="Shimizu H."/>
            <person name="Akiyama M."/>
            <person name="Suehiro M."/>
            <person name="Konohana I."/>
            <person name="Shboul M."/>
            <person name="Teissier S."/>
            <person name="Boussofara L."/>
            <person name="Denguezli M."/>
            <person name="Saad A."/>
            <person name="Gribaa M."/>
            <person name="Dopping-Hepenstal P.J."/>
            <person name="McGrath J.A."/>
            <person name="Brown S.J."/>
            <person name="Goudie D.R."/>
            <person name="Reversade B."/>
            <person name="Munro C.S."/>
            <person name="McLean W.H."/>
        </authorList>
    </citation>
    <scope>INVOLVEMENT IN PPKP1A</scope>
    <scope>FUNCTION</scope>
    <scope>IDENTIFICATION IN AP-1 AND AP-2 COMPLEXES</scope>
    <scope>SUBUNIT</scope>
    <scope>SUBCELLULAR LOCATION</scope>
    <scope>TISSUE SPECIFICITY</scope>
</reference>
<gene>
    <name type="primary">AAGAB</name>
</gene>
<name>AAGAB_HUMAN</name>
<proteinExistence type="evidence at protein level"/>
<protein>
    <recommendedName>
        <fullName>Alpha- and gamma-adaptin-binding protein p34</fullName>
    </recommendedName>
</protein>
<organism>
    <name type="scientific">Homo sapiens</name>
    <name type="common">Human</name>
    <dbReference type="NCBI Taxonomy" id="9606"/>
    <lineage>
        <taxon>Eukaryota</taxon>
        <taxon>Metazoa</taxon>
        <taxon>Chordata</taxon>
        <taxon>Craniata</taxon>
        <taxon>Vertebrata</taxon>
        <taxon>Euteleostomi</taxon>
        <taxon>Mammalia</taxon>
        <taxon>Eutheria</taxon>
        <taxon>Euarchontoglires</taxon>
        <taxon>Primates</taxon>
        <taxon>Haplorrhini</taxon>
        <taxon>Catarrhini</taxon>
        <taxon>Hominidae</taxon>
        <taxon>Homo</taxon>
    </lineage>
</organism>